<proteinExistence type="inferred from homology"/>
<name>RL25_XANOM</name>
<comment type="function">
    <text evidence="1">This is one of the proteins that binds to the 5S RNA in the ribosome where it forms part of the central protuberance.</text>
</comment>
<comment type="subunit">
    <text evidence="1">Part of the 50S ribosomal subunit; part of the 5S rRNA/L5/L18/L25 subcomplex. Contacts the 5S rRNA. Binds to the 5S rRNA independently of L5 and L18.</text>
</comment>
<comment type="similarity">
    <text evidence="1">Belongs to the bacterial ribosomal protein bL25 family. CTC subfamily.</text>
</comment>
<organism>
    <name type="scientific">Xanthomonas oryzae pv. oryzae (strain MAFF 311018)</name>
    <dbReference type="NCBI Taxonomy" id="342109"/>
    <lineage>
        <taxon>Bacteria</taxon>
        <taxon>Pseudomonadati</taxon>
        <taxon>Pseudomonadota</taxon>
        <taxon>Gammaproteobacteria</taxon>
        <taxon>Lysobacterales</taxon>
        <taxon>Lysobacteraceae</taxon>
        <taxon>Xanthomonas</taxon>
    </lineage>
</organism>
<keyword id="KW-0687">Ribonucleoprotein</keyword>
<keyword id="KW-0689">Ribosomal protein</keyword>
<keyword id="KW-0694">RNA-binding</keyword>
<keyword id="KW-0699">rRNA-binding</keyword>
<feature type="chain" id="PRO_0000244252" description="Large ribosomal subunit protein bL25">
    <location>
        <begin position="1"/>
        <end position="211"/>
    </location>
</feature>
<feature type="region of interest" description="Disordered" evidence="2">
    <location>
        <begin position="1"/>
        <end position="20"/>
    </location>
</feature>
<feature type="compositionally biased region" description="Basic and acidic residues" evidence="2">
    <location>
        <begin position="1"/>
        <end position="18"/>
    </location>
</feature>
<accession>Q2NZW8</accession>
<reference key="1">
    <citation type="journal article" date="2005" name="Jpn. Agric. Res. Q.">
        <title>Genome sequence of Xanthomonas oryzae pv. oryzae suggests contribution of large numbers of effector genes and insertion sequences to its race diversity.</title>
        <authorList>
            <person name="Ochiai H."/>
            <person name="Inoue Y."/>
            <person name="Takeya M."/>
            <person name="Sasaki A."/>
            <person name="Kaku H."/>
        </authorList>
    </citation>
    <scope>NUCLEOTIDE SEQUENCE [LARGE SCALE GENOMIC DNA]</scope>
    <source>
        <strain>MAFF 311018</strain>
    </source>
</reference>
<dbReference type="EMBL" id="AP008229">
    <property type="protein sequence ID" value="BAE70159.1"/>
    <property type="molecule type" value="Genomic_DNA"/>
</dbReference>
<dbReference type="RefSeq" id="WP_011260043.1">
    <property type="nucleotide sequence ID" value="NC_007705.1"/>
</dbReference>
<dbReference type="SMR" id="Q2NZW8"/>
<dbReference type="KEGG" id="xom:XOO3404"/>
<dbReference type="HOGENOM" id="CLU_075939_0_1_6"/>
<dbReference type="GO" id="GO:0022625">
    <property type="term" value="C:cytosolic large ribosomal subunit"/>
    <property type="evidence" value="ECO:0007669"/>
    <property type="project" value="TreeGrafter"/>
</dbReference>
<dbReference type="GO" id="GO:0008097">
    <property type="term" value="F:5S rRNA binding"/>
    <property type="evidence" value="ECO:0007669"/>
    <property type="project" value="InterPro"/>
</dbReference>
<dbReference type="GO" id="GO:0003735">
    <property type="term" value="F:structural constituent of ribosome"/>
    <property type="evidence" value="ECO:0007669"/>
    <property type="project" value="InterPro"/>
</dbReference>
<dbReference type="GO" id="GO:0006412">
    <property type="term" value="P:translation"/>
    <property type="evidence" value="ECO:0007669"/>
    <property type="project" value="UniProtKB-UniRule"/>
</dbReference>
<dbReference type="CDD" id="cd00495">
    <property type="entry name" value="Ribosomal_L25_TL5_CTC"/>
    <property type="match status" value="1"/>
</dbReference>
<dbReference type="FunFam" id="2.40.240.10:FF:000002">
    <property type="entry name" value="50S ribosomal protein L25"/>
    <property type="match status" value="1"/>
</dbReference>
<dbReference type="Gene3D" id="2.170.120.20">
    <property type="entry name" value="Ribosomal protein L25, beta domain"/>
    <property type="match status" value="1"/>
</dbReference>
<dbReference type="Gene3D" id="2.40.240.10">
    <property type="entry name" value="Ribosomal Protein L25, Chain P"/>
    <property type="match status" value="1"/>
</dbReference>
<dbReference type="HAMAP" id="MF_01336">
    <property type="entry name" value="Ribosomal_bL25"/>
    <property type="match status" value="1"/>
</dbReference>
<dbReference type="HAMAP" id="MF_01334">
    <property type="entry name" value="Ribosomal_bL25_CTC"/>
    <property type="match status" value="1"/>
</dbReference>
<dbReference type="InterPro" id="IPR020056">
    <property type="entry name" value="Rbsml_bL25/Gln-tRNA_synth_N"/>
</dbReference>
<dbReference type="InterPro" id="IPR011035">
    <property type="entry name" value="Ribosomal_bL25/Gln-tRNA_synth"/>
</dbReference>
<dbReference type="InterPro" id="IPR020057">
    <property type="entry name" value="Ribosomal_bL25_b-dom"/>
</dbReference>
<dbReference type="InterPro" id="IPR037121">
    <property type="entry name" value="Ribosomal_bL25_C"/>
</dbReference>
<dbReference type="InterPro" id="IPR001021">
    <property type="entry name" value="Ribosomal_bL25_long"/>
</dbReference>
<dbReference type="InterPro" id="IPR020055">
    <property type="entry name" value="Ribosomal_bL25_short"/>
</dbReference>
<dbReference type="InterPro" id="IPR029751">
    <property type="entry name" value="Ribosomal_L25_dom"/>
</dbReference>
<dbReference type="InterPro" id="IPR020930">
    <property type="entry name" value="Ribosomal_uL5_bac-type"/>
</dbReference>
<dbReference type="NCBIfam" id="TIGR00731">
    <property type="entry name" value="bL25_bact_ctc"/>
    <property type="match status" value="1"/>
</dbReference>
<dbReference type="NCBIfam" id="NF004128">
    <property type="entry name" value="PRK05618.1-2"/>
    <property type="match status" value="1"/>
</dbReference>
<dbReference type="NCBIfam" id="NF004130">
    <property type="entry name" value="PRK05618.1-5"/>
    <property type="match status" value="1"/>
</dbReference>
<dbReference type="NCBIfam" id="NF004612">
    <property type="entry name" value="PRK05943.1"/>
    <property type="match status" value="1"/>
</dbReference>
<dbReference type="PANTHER" id="PTHR33284">
    <property type="entry name" value="RIBOSOMAL PROTEIN L25/GLN-TRNA SYNTHETASE, ANTI-CODON-BINDING DOMAIN-CONTAINING PROTEIN"/>
    <property type="match status" value="1"/>
</dbReference>
<dbReference type="PANTHER" id="PTHR33284:SF1">
    <property type="entry name" value="RIBOSOMAL PROTEIN L25_GLN-TRNA SYNTHETASE, ANTI-CODON-BINDING DOMAIN-CONTAINING PROTEIN"/>
    <property type="match status" value="1"/>
</dbReference>
<dbReference type="Pfam" id="PF01386">
    <property type="entry name" value="Ribosomal_L25p"/>
    <property type="match status" value="1"/>
</dbReference>
<dbReference type="Pfam" id="PF14693">
    <property type="entry name" value="Ribosomal_TL5_C"/>
    <property type="match status" value="1"/>
</dbReference>
<dbReference type="SUPFAM" id="SSF50715">
    <property type="entry name" value="Ribosomal protein L25-like"/>
    <property type="match status" value="1"/>
</dbReference>
<protein>
    <recommendedName>
        <fullName evidence="1">Large ribosomal subunit protein bL25</fullName>
    </recommendedName>
    <alternativeName>
        <fullName evidence="3">50S ribosomal protein L25</fullName>
    </alternativeName>
    <alternativeName>
        <fullName evidence="1">General stress protein CTC</fullName>
    </alternativeName>
</protein>
<gene>
    <name evidence="1" type="primary">rplY</name>
    <name evidence="1" type="synonym">ctc</name>
    <name type="ordered locus">XOO3404</name>
</gene>
<evidence type="ECO:0000255" key="1">
    <source>
        <dbReference type="HAMAP-Rule" id="MF_01334"/>
    </source>
</evidence>
<evidence type="ECO:0000256" key="2">
    <source>
        <dbReference type="SAM" id="MobiDB-lite"/>
    </source>
</evidence>
<evidence type="ECO:0000305" key="3"/>
<sequence>MAKTHEIKAERRADEGKGASRRLRHAGVIPAIVYGGELEPVSIQLNHEQIWLAQQNEWFYSSILDLNLNGDVQQVLLRDIQRHPFKQLIMHIDFQRVSANQKLSAAVPLHFINEEASPAGKSSEVVVTHELNEVQVVCLPKDLPEFIEVDLGALEVGNVIHLSEIKLPAGVEIPELKLGKERDVAVVAAKHVRIQEEDAAGEEGSEGAETK</sequence>